<comment type="function">
    <text evidence="2 3 4">Involved in uptake and accumulation of various osmoprotectants. Allows the uptake of glycine betaine, proline, ectoine, and pipecolic acid (PubMed:16000740, PubMed:8550465). May be a contributory factor in the infection progression within the host (PubMed:15720084).</text>
</comment>
<comment type="biophysicochemical properties">
    <kinetics>
        <KM evidence="3">50 uM for glycine betaine</KM>
        <Vmax evidence="3">270.0 nmol/min/mg enzyme</Vmax>
    </kinetics>
</comment>
<comment type="subcellular location">
    <subcellularLocation>
        <location evidence="4">Cell inner membrane</location>
        <topology evidence="1">Multi-pass membrane protein</topology>
    </subcellularLocation>
</comment>
<comment type="induction">
    <text evidence="4">Induced by osmotic strength and repressed by osmoprotectants. Expression is not affected by the growth phase.</text>
</comment>
<comment type="disruption phenotype">
    <text evidence="2 3">Disruption of the gene enhances aggressiveness of the bacterium. Under anaerobic conditions, disruption increases pectate lyase (Pel) production and increases the maceration efficiency on potato tubers (PubMed:15720084). Uptake of glycine betaine and choline is completely abolished in the ousA-ousB double mutant (PubMed:16000740).</text>
</comment>
<comment type="similarity">
    <text evidence="6">Belongs to the major facilitator superfamily. Sugar transporter (TC 2.A.1.1) family.</text>
</comment>
<accession>Q47421</accession>
<accession>E0SGQ5</accession>
<gene>
    <name evidence="5" type="primary">ousA</name>
    <name type="ordered locus">Dda3937_00791</name>
</gene>
<keyword id="KW-0029">Amino-acid transport</keyword>
<keyword id="KW-0997">Cell inner membrane</keyword>
<keyword id="KW-1003">Cell membrane</keyword>
<keyword id="KW-0175">Coiled coil</keyword>
<keyword id="KW-0472">Membrane</keyword>
<keyword id="KW-1185">Reference proteome</keyword>
<keyword id="KW-0346">Stress response</keyword>
<keyword id="KW-0769">Symport</keyword>
<keyword id="KW-0812">Transmembrane</keyword>
<keyword id="KW-1133">Transmembrane helix</keyword>
<keyword id="KW-0813">Transport</keyword>
<protein>
    <recommendedName>
        <fullName evidence="6">Glycine betaine/proline/ectoine/pipecolic acid transporter OusA</fullName>
    </recommendedName>
    <alternativeName>
        <fullName evidence="5">Osmoprotectant uptake system A</fullName>
    </alternativeName>
</protein>
<organism>
    <name type="scientific">Dickeya dadantii (strain 3937)</name>
    <name type="common">Erwinia chrysanthemi (strain 3937)</name>
    <dbReference type="NCBI Taxonomy" id="198628"/>
    <lineage>
        <taxon>Bacteria</taxon>
        <taxon>Pseudomonadati</taxon>
        <taxon>Pseudomonadota</taxon>
        <taxon>Gammaproteobacteria</taxon>
        <taxon>Enterobacterales</taxon>
        <taxon>Pectobacteriaceae</taxon>
        <taxon>Dickeya</taxon>
    </lineage>
</organism>
<sequence length="501" mass="54858">MKLKRKRVKPIALDDVTIIDDGRLRKAITAAALGNAMEWFDFGVYGFVAYALGQVFFPGADPGVQMIAALATFSVPFLIRPLGGVFFGALGDKYGRQKILAITIIIMSISTFCIGLIPSYERIGIWAPILLLLAKMAQGFSVGGEYTGASIFVAEYSPDRKRGFMGSWLDFGSIAGFVLGAGVVVLISTLIGEQAFLAWGWRLPFFLALPLGLIGLYLRHALEETPAFRQHVEKLEQNDRDGLKAGPGVSFREIATHHWKSLLVCIGLVIATNVTYYMLLTYMPSYLSHSLHYSENHGVLIIIAIMIGMLFVQPVMGLLSDRFGRKPFVVIGSVAMFFLAVPSFMLINSDIIGLIFLGLLMLAVILNAFTGVMASTLPALFPTHIRYSALASAFNISVLIAGLTPTVAAWLVESSQNLYMPAYYLMVIAVIGLLTGLFMKETANKPLKGATPAASDLSEAKEILQEHHDNIEHKIEDITQQIAELEAKRQLLVAQHPRIND</sequence>
<evidence type="ECO:0000255" key="1"/>
<evidence type="ECO:0000269" key="2">
    <source>
    </source>
</evidence>
<evidence type="ECO:0000269" key="3">
    <source>
    </source>
</evidence>
<evidence type="ECO:0000269" key="4">
    <source>
    </source>
</evidence>
<evidence type="ECO:0000303" key="5">
    <source>
    </source>
</evidence>
<evidence type="ECO:0000305" key="6"/>
<evidence type="ECO:0000305" key="7">
    <source>
    </source>
</evidence>
<proteinExistence type="evidence at protein level"/>
<name>OUSA_DICD3</name>
<dbReference type="EMBL" id="X82267">
    <property type="protein sequence ID" value="CAA57718.1"/>
    <property type="molecule type" value="Genomic_DNA"/>
</dbReference>
<dbReference type="EMBL" id="CP002038">
    <property type="protein sequence ID" value="ADM97704.1"/>
    <property type="molecule type" value="Genomic_DNA"/>
</dbReference>
<dbReference type="RefSeq" id="WP_013317165.1">
    <property type="nucleotide sequence ID" value="NC_014500.1"/>
</dbReference>
<dbReference type="SMR" id="Q47421"/>
<dbReference type="STRING" id="198628.Dda3937_00791"/>
<dbReference type="KEGG" id="ddd:Dda3937_00791"/>
<dbReference type="PATRIC" id="fig|198628.6.peg.1498"/>
<dbReference type="eggNOG" id="COG0477">
    <property type="taxonomic scope" value="Bacteria"/>
</dbReference>
<dbReference type="HOGENOM" id="CLU_001265_39_0_6"/>
<dbReference type="OrthoDB" id="3690818at2"/>
<dbReference type="Proteomes" id="UP000006859">
    <property type="component" value="Chromosome"/>
</dbReference>
<dbReference type="GO" id="GO:0005886">
    <property type="term" value="C:plasma membrane"/>
    <property type="evidence" value="ECO:0007669"/>
    <property type="project" value="UniProtKB-SubCell"/>
</dbReference>
<dbReference type="GO" id="GO:0015293">
    <property type="term" value="F:symporter activity"/>
    <property type="evidence" value="ECO:0007669"/>
    <property type="project" value="UniProtKB-KW"/>
</dbReference>
<dbReference type="GO" id="GO:0006865">
    <property type="term" value="P:amino acid transport"/>
    <property type="evidence" value="ECO:0007669"/>
    <property type="project" value="UniProtKB-KW"/>
</dbReference>
<dbReference type="CDD" id="cd17366">
    <property type="entry name" value="MFS_ProP"/>
    <property type="match status" value="1"/>
</dbReference>
<dbReference type="FunFam" id="1.20.1250.20:FF:000001">
    <property type="entry name" value="Dicarboxylate MFS transporter"/>
    <property type="match status" value="1"/>
</dbReference>
<dbReference type="FunFam" id="1.20.1250.20:FF:000051">
    <property type="entry name" value="Proline/glycine betaine transporter"/>
    <property type="match status" value="1"/>
</dbReference>
<dbReference type="Gene3D" id="1.20.1250.20">
    <property type="entry name" value="MFS general substrate transporter like domains"/>
    <property type="match status" value="2"/>
</dbReference>
<dbReference type="InterPro" id="IPR051084">
    <property type="entry name" value="H+-coupled_symporters"/>
</dbReference>
<dbReference type="InterPro" id="IPR020846">
    <property type="entry name" value="MFS_dom"/>
</dbReference>
<dbReference type="InterPro" id="IPR005828">
    <property type="entry name" value="MFS_sugar_transport-like"/>
</dbReference>
<dbReference type="InterPro" id="IPR036259">
    <property type="entry name" value="MFS_trans_sf"/>
</dbReference>
<dbReference type="InterPro" id="IPR004736">
    <property type="entry name" value="MHS_symport"/>
</dbReference>
<dbReference type="InterPro" id="IPR015041">
    <property type="entry name" value="Osmo_CC"/>
</dbReference>
<dbReference type="InterPro" id="IPR036292">
    <property type="entry name" value="ProP_C"/>
</dbReference>
<dbReference type="InterPro" id="IPR005829">
    <property type="entry name" value="Sugar_transporter_CS"/>
</dbReference>
<dbReference type="NCBIfam" id="TIGR00883">
    <property type="entry name" value="2A0106"/>
    <property type="match status" value="1"/>
</dbReference>
<dbReference type="NCBIfam" id="NF007927">
    <property type="entry name" value="PRK10642.1"/>
    <property type="match status" value="1"/>
</dbReference>
<dbReference type="PANTHER" id="PTHR43528">
    <property type="entry name" value="ALPHA-KETOGLUTARATE PERMEASE"/>
    <property type="match status" value="1"/>
</dbReference>
<dbReference type="PANTHER" id="PTHR43528:SF5">
    <property type="entry name" value="PROLINE_BETAINE TRANSPORTER"/>
    <property type="match status" value="1"/>
</dbReference>
<dbReference type="Pfam" id="PF08946">
    <property type="entry name" value="Osmo_CC"/>
    <property type="match status" value="1"/>
</dbReference>
<dbReference type="Pfam" id="PF00083">
    <property type="entry name" value="Sugar_tr"/>
    <property type="match status" value="1"/>
</dbReference>
<dbReference type="SUPFAM" id="SSF103473">
    <property type="entry name" value="MFS general substrate transporter"/>
    <property type="match status" value="1"/>
</dbReference>
<dbReference type="SUPFAM" id="SSF103661">
    <property type="entry name" value="Proline/betaine transporter ProP, C-terminal cytoplasmic domain"/>
    <property type="match status" value="1"/>
</dbReference>
<dbReference type="PROSITE" id="PS50850">
    <property type="entry name" value="MFS"/>
    <property type="match status" value="1"/>
</dbReference>
<dbReference type="PROSITE" id="PS00216">
    <property type="entry name" value="SUGAR_TRANSPORT_1"/>
    <property type="match status" value="1"/>
</dbReference>
<feature type="chain" id="PRO_0000050323" description="Glycine betaine/proline/ectoine/pipecolic acid transporter OusA">
    <location>
        <begin position="1"/>
        <end position="501"/>
    </location>
</feature>
<feature type="topological domain" description="Cytoplasmic" evidence="7">
    <location>
        <begin position="1"/>
        <end position="38"/>
    </location>
</feature>
<feature type="transmembrane region" description="Helical" evidence="1">
    <location>
        <begin position="39"/>
        <end position="59"/>
    </location>
</feature>
<feature type="topological domain" description="Periplasmic" evidence="6">
    <location>
        <begin position="60"/>
        <end position="66"/>
    </location>
</feature>
<feature type="transmembrane region" description="Helical" evidence="1">
    <location>
        <begin position="67"/>
        <end position="87"/>
    </location>
</feature>
<feature type="topological domain" description="Cytoplasmic" evidence="6">
    <location>
        <begin position="88"/>
        <end position="98"/>
    </location>
</feature>
<feature type="transmembrane region" description="Helical" evidence="1">
    <location>
        <begin position="99"/>
        <end position="119"/>
    </location>
</feature>
<feature type="topological domain" description="Periplasmic" evidence="6">
    <location>
        <begin position="120"/>
        <end position="122"/>
    </location>
</feature>
<feature type="transmembrane region" description="Helical" evidence="1">
    <location>
        <begin position="123"/>
        <end position="143"/>
    </location>
</feature>
<feature type="topological domain" description="Cytoplasmic" evidence="6">
    <location>
        <begin position="144"/>
        <end position="170"/>
    </location>
</feature>
<feature type="transmembrane region" description="Helical" evidence="1">
    <location>
        <begin position="171"/>
        <end position="191"/>
    </location>
</feature>
<feature type="topological domain" description="Periplasmic" evidence="6">
    <location>
        <begin position="192"/>
        <end position="195"/>
    </location>
</feature>
<feature type="transmembrane region" description="Helical" evidence="1">
    <location>
        <begin position="196"/>
        <end position="216"/>
    </location>
</feature>
<feature type="topological domain" description="Cytoplasmic" evidence="6">
    <location>
        <begin position="217"/>
        <end position="261"/>
    </location>
</feature>
<feature type="transmembrane region" description="Helical" evidence="1">
    <location>
        <begin position="262"/>
        <end position="282"/>
    </location>
</feature>
<feature type="topological domain" description="Periplasmic" evidence="6">
    <location>
        <begin position="283"/>
        <end position="298"/>
    </location>
</feature>
<feature type="transmembrane region" description="Helical" evidence="1">
    <location>
        <begin position="299"/>
        <end position="319"/>
    </location>
</feature>
<feature type="topological domain" description="Cytoplasmic" evidence="6">
    <location>
        <begin position="320"/>
        <end position="326"/>
    </location>
</feature>
<feature type="transmembrane region" description="Helical" evidence="1">
    <location>
        <begin position="327"/>
        <end position="347"/>
    </location>
</feature>
<feature type="topological domain" description="Periplasmic" evidence="6">
    <location>
        <begin position="348"/>
        <end position="350"/>
    </location>
</feature>
<feature type="transmembrane region" description="Helical" evidence="1">
    <location>
        <begin position="351"/>
        <end position="371"/>
    </location>
</feature>
<feature type="topological domain" description="Cytoplasmic" evidence="6">
    <location>
        <begin position="372"/>
        <end position="391"/>
    </location>
</feature>
<feature type="transmembrane region" description="Helical" evidence="1">
    <location>
        <begin position="392"/>
        <end position="412"/>
    </location>
</feature>
<feature type="topological domain" description="Periplasmic" evidence="6">
    <location>
        <begin position="413"/>
        <end position="417"/>
    </location>
</feature>
<feature type="transmembrane region" description="Helical" evidence="1">
    <location>
        <begin position="418"/>
        <end position="438"/>
    </location>
</feature>
<feature type="topological domain" description="Cytoplasmic" evidence="6">
    <location>
        <begin position="439"/>
        <end position="501"/>
    </location>
</feature>
<feature type="coiled-coil region" evidence="1">
    <location>
        <begin position="461"/>
        <end position="495"/>
    </location>
</feature>
<feature type="sequence conflict" description="In Ref. 1; CAA57718." evidence="6" ref="1">
    <location>
        <position position="60"/>
    </location>
</feature>
<feature type="sequence conflict" description="In Ref. 1; CAA57718." evidence="6" ref="1">
    <original>M</original>
    <variation>S</variation>
    <location>
        <position position="66"/>
    </location>
</feature>
<feature type="sequence conflict" description="In Ref. 1; CAA57718." evidence="6" ref="1">
    <original>IR</original>
    <variation>M</variation>
    <location>
        <begin position="79"/>
        <end position="80"/>
    </location>
</feature>
<feature type="sequence conflict" description="In Ref. 1; CAA57718." evidence="6" ref="1">
    <original>RHA</original>
    <variation>AT</variation>
    <location>
        <begin position="219"/>
        <end position="221"/>
    </location>
</feature>
<reference key="1">
    <citation type="journal article" date="1996" name="J. Bacteriol.">
        <title>Characterization of the Erwinia chrysanthemi osmoprotectant transporter gene ousA.</title>
        <authorList>
            <person name="Gouesbet G."/>
            <person name="Trautwetter A."/>
            <person name="Bonnassie S."/>
            <person name="Wu L.F."/>
            <person name="Blanco C."/>
        </authorList>
    </citation>
    <scope>NUCLEOTIDE SEQUENCE [GENOMIC DNA]</scope>
    <scope>FUNCTION</scope>
    <scope>SUBCELLULAR LOCATION</scope>
    <scope>INDUCTION</scope>
    <source>
        <strain>3937</strain>
    </source>
</reference>
<reference key="2">
    <citation type="journal article" date="2011" name="J. Bacteriol.">
        <title>Genome sequence of the plant-pathogenic bacterium Dickeya dadantii 3937.</title>
        <authorList>
            <person name="Glasner J.D."/>
            <person name="Yang C.H."/>
            <person name="Reverchon S."/>
            <person name="Hugouvieux-Cotte-Pattat N."/>
            <person name="Condemine G."/>
            <person name="Bohin J.P."/>
            <person name="Van Gijsegem F."/>
            <person name="Yang S."/>
            <person name="Franza T."/>
            <person name="Expert D."/>
            <person name="Plunkett G. III"/>
            <person name="San Francisco M.J."/>
            <person name="Charkowski A.O."/>
            <person name="Py B."/>
            <person name="Bell K."/>
            <person name="Rauscher L."/>
            <person name="Rodriguez-Palenzuela P."/>
            <person name="Toussaint A."/>
            <person name="Holeva M.C."/>
            <person name="He S.Y."/>
            <person name="Douet V."/>
            <person name="Boccara M."/>
            <person name="Blanco C."/>
            <person name="Toth I."/>
            <person name="Anderson B.D."/>
            <person name="Biehl B.S."/>
            <person name="Mau B."/>
            <person name="Flynn S.M."/>
            <person name="Barras F."/>
            <person name="Lindeberg M."/>
            <person name="Birch P.R."/>
            <person name="Tsuyumu S."/>
            <person name="Shi X."/>
            <person name="Hibbing M."/>
            <person name="Yap M.N."/>
            <person name="Carpentier M."/>
            <person name="Dassa E."/>
            <person name="Umehara M."/>
            <person name="Kim J.F."/>
            <person name="Rusch M."/>
            <person name="Soni P."/>
            <person name="Mayhew G.F."/>
            <person name="Fouts D.E."/>
            <person name="Gill S.R."/>
            <person name="Blattner F.R."/>
            <person name="Keen N.T."/>
            <person name="Perna N.T."/>
        </authorList>
    </citation>
    <scope>NUCLEOTIDE SEQUENCE [LARGE SCALE GENOMIC DNA]</scope>
    <source>
        <strain>3937</strain>
    </source>
</reference>
<reference key="3">
    <citation type="journal article" date="2005" name="Appl. Environ. Microbiol.">
        <title>OusB, a broad-specificity ABC-type transporter from Erwinia chrysanthemi, mediates uptake of glycine betaine and choline with a high affinity.</title>
        <authorList>
            <person name="Choquet G."/>
            <person name="Jehan N."/>
            <person name="Pissavin C."/>
            <person name="Blanco C."/>
            <person name="Jebbar M."/>
        </authorList>
    </citation>
    <scope>FUNCTION</scope>
    <scope>BIOPHYSICOCHEMICAL PROPERTIES</scope>
    <scope>DISRUPTION PHENOTYPE</scope>
    <source>
        <strain>3937</strain>
    </source>
</reference>
<reference key="4">
    <citation type="journal article" date="2005" name="Mol. Plant Microbe Interact.">
        <title>Mutations of ousA alter the virulence of Erwinia chrysanthemi.</title>
        <authorList>
            <person name="Gloux K."/>
            <person name="Touze T."/>
            <person name="Pagot Y."/>
            <person name="Jouan B."/>
            <person name="Blanco C."/>
        </authorList>
    </citation>
    <scope>FUNCTION</scope>
    <scope>DISRUPTION PHENOTYPE</scope>
    <source>
        <strain>3937</strain>
    </source>
</reference>